<accession>Q51945</accession>
<name>TTUC_PSEPU</name>
<evidence type="ECO:0000250" key="1">
    <source>
        <dbReference type="UniProtKB" id="P37412"/>
    </source>
</evidence>
<evidence type="ECO:0000269" key="2">
    <source>
    </source>
</evidence>
<evidence type="ECO:0000269" key="3">
    <source>
    </source>
</evidence>
<evidence type="ECO:0000305" key="4"/>
<evidence type="ECO:0007829" key="5">
    <source>
        <dbReference type="PDB" id="3FLK"/>
    </source>
</evidence>
<evidence type="ECO:0007829" key="6">
    <source>
        <dbReference type="PDB" id="3FMX"/>
    </source>
</evidence>
<organism>
    <name type="scientific">Pseudomonas putida</name>
    <name type="common">Arthrobacter siderocapsulatus</name>
    <dbReference type="NCBI Taxonomy" id="303"/>
    <lineage>
        <taxon>Bacteria</taxon>
        <taxon>Pseudomonadati</taxon>
        <taxon>Pseudomonadota</taxon>
        <taxon>Gammaproteobacteria</taxon>
        <taxon>Pseudomonadales</taxon>
        <taxon>Pseudomonadaceae</taxon>
        <taxon>Pseudomonas</taxon>
    </lineage>
</organism>
<comment type="function">
    <text evidence="2">Has multiple catalytic activities. Apart from catalyzing the oxidation of (+)-tartrate to oxaloglycolate, also converts meso-tartrate to D-glycerate and catalyzes the oxidative decarboxylation of D-malate to pyruvate.</text>
</comment>
<comment type="catalytic activity">
    <reaction evidence="2">
        <text>tartrate + NAD(+) = 2-hydroxy-3-oxosuccinate + NADH + H(+)</text>
        <dbReference type="Rhea" id="RHEA:18853"/>
        <dbReference type="ChEBI" id="CHEBI:15378"/>
        <dbReference type="ChEBI" id="CHEBI:30929"/>
        <dbReference type="ChEBI" id="CHEBI:57540"/>
        <dbReference type="ChEBI" id="CHEBI:57945"/>
        <dbReference type="ChEBI" id="CHEBI:58265"/>
        <dbReference type="EC" id="1.1.1.93"/>
    </reaction>
</comment>
<comment type="catalytic activity">
    <reaction evidence="2">
        <text>(2R,3S)-tartrate + NAD(+) = 2-hydroxy-3-oxosuccinate + NADH + H(+)</text>
        <dbReference type="Rhea" id="RHEA:16457"/>
        <dbReference type="ChEBI" id="CHEBI:15378"/>
        <dbReference type="ChEBI" id="CHEBI:30928"/>
        <dbReference type="ChEBI" id="CHEBI:57540"/>
        <dbReference type="ChEBI" id="CHEBI:57945"/>
        <dbReference type="ChEBI" id="CHEBI:58265"/>
        <dbReference type="EC" id="1.1.1.93"/>
    </reaction>
</comment>
<comment type="catalytic activity">
    <reaction evidence="2">
        <text>(2R,3R)-tartrate + NAD(+) = 2-hydroxy-3-oxosuccinate + NADH + H(+)</text>
        <dbReference type="Rhea" id="RHEA:15209"/>
        <dbReference type="ChEBI" id="CHEBI:15378"/>
        <dbReference type="ChEBI" id="CHEBI:30924"/>
        <dbReference type="ChEBI" id="CHEBI:57540"/>
        <dbReference type="ChEBI" id="CHEBI:57945"/>
        <dbReference type="ChEBI" id="CHEBI:58265"/>
        <dbReference type="EC" id="1.1.1.93"/>
    </reaction>
</comment>
<comment type="catalytic activity">
    <reaction evidence="2">
        <text>(2R,3R)-tartrate + H(+) = (R)-glycerate + CO2</text>
        <dbReference type="Rhea" id="RHEA:13317"/>
        <dbReference type="ChEBI" id="CHEBI:15378"/>
        <dbReference type="ChEBI" id="CHEBI:16526"/>
        <dbReference type="ChEBI" id="CHEBI:16659"/>
        <dbReference type="ChEBI" id="CHEBI:30924"/>
        <dbReference type="EC" id="4.1.1.73"/>
    </reaction>
</comment>
<comment type="catalytic activity">
    <reaction evidence="2">
        <text>(R)-malate + NAD(+) = pyruvate + CO2 + NADH</text>
        <dbReference type="Rhea" id="RHEA:18365"/>
        <dbReference type="ChEBI" id="CHEBI:15361"/>
        <dbReference type="ChEBI" id="CHEBI:15588"/>
        <dbReference type="ChEBI" id="CHEBI:16526"/>
        <dbReference type="ChEBI" id="CHEBI:57540"/>
        <dbReference type="ChEBI" id="CHEBI:57945"/>
        <dbReference type="EC" id="1.1.1.83"/>
    </reaction>
</comment>
<comment type="cofactor">
    <cofactor evidence="2">
        <name>Mg(2+)</name>
        <dbReference type="ChEBI" id="CHEBI:18420"/>
    </cofactor>
    <cofactor evidence="2">
        <name>Mn(2+)</name>
        <dbReference type="ChEBI" id="CHEBI:29035"/>
    </cofactor>
    <text evidence="1">Binds 1 Mg(2+) or Mn(2+) ion per subunit.</text>
</comment>
<comment type="cofactor">
    <cofactor evidence="2">
        <name>K(+)</name>
        <dbReference type="ChEBI" id="CHEBI:29103"/>
    </cofactor>
</comment>
<comment type="biophysicochemical properties">
    <kinetics>
        <KM evidence="2">0.058 mM for D-malate</KM>
        <KM evidence="2">1.08 mM for (+)-tartrate</KM>
        <KM evidence="2">0.12 mM for NAD(+) (for (+)-tartrate oxidation)</KM>
        <KM evidence="2">0.05 mM for NAD(+) (for D-malate oxidation)</KM>
    </kinetics>
    <temperatureDependence>
        <text evidence="2">Thermostable. Fully active after heating 10 minutes at 65 degrees Celsius and retains half its catalytic activity after 10 minutes at 72 degrees Celsius. Inactive after heating 10 minutes at 78 degrees Celsius.</text>
    </temperatureDependence>
</comment>
<comment type="pathway">
    <text>Carbohydrate acid metabolism; tartrate degradation; 2-hydroxy-3-oxosuccinate from L-tartrate: step 1/1.</text>
</comment>
<comment type="pathway">
    <text>Carbohydrate acid metabolism; tartrate degradation; 2-hydroxy-3-oxosuccinate from meso-tartrate: step 1/1.</text>
</comment>
<comment type="pathway">
    <text>Carbohydrate acid metabolism; tartrate degradation; D-glycerate from L-tartrate: step 1/1.</text>
</comment>
<comment type="subunit">
    <text evidence="4">Homodimer.</text>
</comment>
<comment type="subcellular location">
    <subcellularLocation>
        <location>Cytoplasm</location>
    </subcellularLocation>
</comment>
<comment type="similarity">
    <text evidence="4">Belongs to the isocitrate and isopropylmalate dehydrogenases family.</text>
</comment>
<feature type="initiator methionine" description="Removed" evidence="3">
    <location>
        <position position="1"/>
    </location>
</feature>
<feature type="chain" id="PRO_0000083819" description="Tartrate dehydrogenase/decarboxylase">
    <location>
        <begin position="2"/>
        <end position="365"/>
    </location>
</feature>
<feature type="binding site" evidence="1">
    <location>
        <position position="225"/>
    </location>
    <ligand>
        <name>Mn(2+)</name>
        <dbReference type="ChEBI" id="CHEBI:29035"/>
    </ligand>
</feature>
<feature type="binding site" evidence="1">
    <location>
        <position position="250"/>
    </location>
    <ligand>
        <name>Mn(2+)</name>
        <dbReference type="ChEBI" id="CHEBI:29035"/>
    </ligand>
</feature>
<feature type="binding site" evidence="1">
    <location>
        <position position="254"/>
    </location>
    <ligand>
        <name>Mn(2+)</name>
        <dbReference type="ChEBI" id="CHEBI:29035"/>
    </ligand>
</feature>
<feature type="strand" evidence="5">
    <location>
        <begin position="6"/>
        <end position="14"/>
    </location>
</feature>
<feature type="helix" evidence="5">
    <location>
        <begin position="17"/>
        <end position="35"/>
    </location>
</feature>
<feature type="strand" evidence="5">
    <location>
        <begin position="39"/>
        <end position="43"/>
    </location>
</feature>
<feature type="helix" evidence="5">
    <location>
        <begin position="49"/>
        <end position="55"/>
    </location>
</feature>
<feature type="strand" evidence="5">
    <location>
        <begin position="56"/>
        <end position="59"/>
    </location>
</feature>
<feature type="helix" evidence="5">
    <location>
        <begin position="63"/>
        <end position="67"/>
    </location>
</feature>
<feature type="strand" evidence="5">
    <location>
        <begin position="70"/>
        <end position="77"/>
    </location>
</feature>
<feature type="turn" evidence="5">
    <location>
        <begin position="81"/>
        <end position="83"/>
    </location>
</feature>
<feature type="helix" evidence="5">
    <location>
        <begin position="86"/>
        <end position="91"/>
    </location>
</feature>
<feature type="helix" evidence="5">
    <location>
        <begin position="94"/>
        <end position="100"/>
    </location>
</feature>
<feature type="strand" evidence="5">
    <location>
        <begin position="105"/>
        <end position="111"/>
    </location>
</feature>
<feature type="strand" evidence="6">
    <location>
        <begin position="119"/>
        <end position="122"/>
    </location>
</feature>
<feature type="strand" evidence="5">
    <location>
        <begin position="127"/>
        <end position="135"/>
    </location>
</feature>
<feature type="strand" evidence="5">
    <location>
        <begin position="137"/>
        <end position="139"/>
    </location>
</feature>
<feature type="strand" evidence="5">
    <location>
        <begin position="145"/>
        <end position="149"/>
    </location>
</feature>
<feature type="strand" evidence="5">
    <location>
        <begin position="156"/>
        <end position="164"/>
    </location>
</feature>
<feature type="helix" evidence="5">
    <location>
        <begin position="165"/>
        <end position="181"/>
    </location>
</feature>
<feature type="strand" evidence="5">
    <location>
        <begin position="182"/>
        <end position="184"/>
    </location>
</feature>
<feature type="strand" evidence="5">
    <location>
        <begin position="186"/>
        <end position="191"/>
    </location>
</feature>
<feature type="turn" evidence="5">
    <location>
        <begin position="193"/>
        <end position="195"/>
    </location>
</feature>
<feature type="strand" evidence="6">
    <location>
        <begin position="196"/>
        <end position="198"/>
    </location>
</feature>
<feature type="helix" evidence="5">
    <location>
        <begin position="199"/>
        <end position="211"/>
    </location>
</feature>
<feature type="strand" evidence="5">
    <location>
        <begin position="218"/>
        <end position="223"/>
    </location>
</feature>
<feature type="helix" evidence="5">
    <location>
        <begin position="224"/>
        <end position="233"/>
    </location>
</feature>
<feature type="helix" evidence="5">
    <location>
        <begin position="235"/>
        <end position="237"/>
    </location>
</feature>
<feature type="strand" evidence="5">
    <location>
        <begin position="239"/>
        <end position="242"/>
    </location>
</feature>
<feature type="helix" evidence="5">
    <location>
        <begin position="246"/>
        <end position="259"/>
    </location>
</feature>
<feature type="helix" evidence="6">
    <location>
        <begin position="263"/>
        <end position="265"/>
    </location>
</feature>
<feature type="strand" evidence="5">
    <location>
        <begin position="267"/>
        <end position="271"/>
    </location>
</feature>
<feature type="strand" evidence="5">
    <location>
        <begin position="279"/>
        <end position="285"/>
    </location>
</feature>
<feature type="turn" evidence="5">
    <location>
        <begin position="289"/>
        <end position="293"/>
    </location>
</feature>
<feature type="helix" evidence="5">
    <location>
        <begin position="300"/>
        <end position="314"/>
    </location>
</feature>
<feature type="helix" evidence="5">
    <location>
        <begin position="318"/>
        <end position="337"/>
    </location>
</feature>
<feature type="helix" evidence="5">
    <location>
        <begin position="342"/>
        <end position="344"/>
    </location>
</feature>
<feature type="helix" evidence="5">
    <location>
        <begin position="350"/>
        <end position="362"/>
    </location>
</feature>
<dbReference type="EC" id="1.1.1.93" evidence="2"/>
<dbReference type="EC" id="4.1.1.73" evidence="2"/>
<dbReference type="EC" id="1.1.1.83" evidence="2"/>
<dbReference type="EMBL" id="U05986">
    <property type="protein sequence ID" value="AAA60327.1"/>
    <property type="molecule type" value="Genomic_DNA"/>
</dbReference>
<dbReference type="PIR" id="S48640">
    <property type="entry name" value="S48640"/>
</dbReference>
<dbReference type="PDB" id="3FLK">
    <property type="method" value="X-ray"/>
    <property type="resolution" value="2.00 A"/>
    <property type="chains" value="A/B/C/D=1-365"/>
</dbReference>
<dbReference type="PDB" id="3FMX">
    <property type="method" value="X-ray"/>
    <property type="resolution" value="2.95 A"/>
    <property type="chains" value="X=1-365"/>
</dbReference>
<dbReference type="PDBsum" id="3FLK"/>
<dbReference type="PDBsum" id="3FMX"/>
<dbReference type="SMR" id="Q51945"/>
<dbReference type="BioCyc" id="MetaCyc:MONOMER-12928"/>
<dbReference type="UniPathway" id="UPA00839">
    <property type="reaction ID" value="UER00800"/>
</dbReference>
<dbReference type="UniPathway" id="UPA00839">
    <property type="reaction ID" value="UER00801"/>
</dbReference>
<dbReference type="UniPathway" id="UPA00839">
    <property type="reaction ID" value="UER00803"/>
</dbReference>
<dbReference type="EvolutionaryTrace" id="Q51945"/>
<dbReference type="GO" id="GO:0005737">
    <property type="term" value="C:cytoplasm"/>
    <property type="evidence" value="ECO:0007669"/>
    <property type="project" value="UniProtKB-SubCell"/>
</dbReference>
<dbReference type="GO" id="GO:0046553">
    <property type="term" value="F:D-malate dehydrogenase (decarboxylating) (NAD+) activity"/>
    <property type="evidence" value="ECO:0007669"/>
    <property type="project" value="UniProtKB-EC"/>
</dbReference>
<dbReference type="GO" id="GO:0000287">
    <property type="term" value="F:magnesium ion binding"/>
    <property type="evidence" value="ECO:0007669"/>
    <property type="project" value="InterPro"/>
</dbReference>
<dbReference type="GO" id="GO:0051287">
    <property type="term" value="F:NAD binding"/>
    <property type="evidence" value="ECO:0007669"/>
    <property type="project" value="InterPro"/>
</dbReference>
<dbReference type="GO" id="GO:0050319">
    <property type="term" value="F:tartrate decarboxylase activity"/>
    <property type="evidence" value="ECO:0007669"/>
    <property type="project" value="UniProtKB-EC"/>
</dbReference>
<dbReference type="GO" id="GO:0009027">
    <property type="term" value="F:tartrate dehydrogenase activity"/>
    <property type="evidence" value="ECO:0007669"/>
    <property type="project" value="UniProtKB-EC"/>
</dbReference>
<dbReference type="Gene3D" id="3.40.718.10">
    <property type="entry name" value="Isopropylmalate Dehydrogenase"/>
    <property type="match status" value="1"/>
</dbReference>
<dbReference type="InterPro" id="IPR050501">
    <property type="entry name" value="ICDH/IPMDH"/>
</dbReference>
<dbReference type="InterPro" id="IPR019818">
    <property type="entry name" value="IsoCit/isopropylmalate_DH_CS"/>
</dbReference>
<dbReference type="InterPro" id="IPR024084">
    <property type="entry name" value="IsoPropMal-DH-like_dom"/>
</dbReference>
<dbReference type="InterPro" id="IPR011829">
    <property type="entry name" value="TTC_DH"/>
</dbReference>
<dbReference type="NCBIfam" id="TIGR02089">
    <property type="entry name" value="TTC"/>
    <property type="match status" value="1"/>
</dbReference>
<dbReference type="PANTHER" id="PTHR43275">
    <property type="entry name" value="D-MALATE DEHYDROGENASE [DECARBOXYLATING]"/>
    <property type="match status" value="1"/>
</dbReference>
<dbReference type="PANTHER" id="PTHR43275:SF1">
    <property type="entry name" value="D-MALATE DEHYDROGENASE [DECARBOXYLATING]"/>
    <property type="match status" value="1"/>
</dbReference>
<dbReference type="Pfam" id="PF00180">
    <property type="entry name" value="Iso_dh"/>
    <property type="match status" value="1"/>
</dbReference>
<dbReference type="SMART" id="SM01329">
    <property type="entry name" value="Iso_dh"/>
    <property type="match status" value="1"/>
</dbReference>
<dbReference type="SUPFAM" id="SSF53659">
    <property type="entry name" value="Isocitrate/Isopropylmalate dehydrogenase-like"/>
    <property type="match status" value="1"/>
</dbReference>
<dbReference type="PROSITE" id="PS00470">
    <property type="entry name" value="IDH_IMDH"/>
    <property type="match status" value="1"/>
</dbReference>
<proteinExistence type="evidence at protein level"/>
<keyword id="KW-0002">3D-structure</keyword>
<keyword id="KW-0963">Cytoplasm</keyword>
<keyword id="KW-0903">Direct protein sequencing</keyword>
<keyword id="KW-0456">Lyase</keyword>
<keyword id="KW-0460">Magnesium</keyword>
<keyword id="KW-0464">Manganese</keyword>
<keyword id="KW-0479">Metal-binding</keyword>
<keyword id="KW-0520">NAD</keyword>
<keyword id="KW-0560">Oxidoreductase</keyword>
<sequence>MPAHSFRIAAIPGDGIGLEVLPEGIRVLEAAALKHGLALEFDTFEWASCDYYLQHGKMMPDDWAEQLKQYDAIYFGAVDWPDKVPDHISLWGSLLKFRREFDQYVNIRPVRLFPGVPCALANRKVGDIDFVVVRENTEGEYSSLGGIMFENTENEIVIQESIFTRRGVDRILKYAFDLAEKRERKHVTSATKSNGMAISMPYWDKRTEAMAAHYPHVSWDKQHIDILCARFVLQPERFDVVVVASNLFGDILSDLGPACAGTIGIAPSANLNPERNFPSLFEPVHGSAPDIFGKNIANPIAMIWSGALMLEFLGQGDERYQRAHDDMLNAIERVIADGSVTPDMGGTLSTQQVGAAISDTLARLD</sequence>
<reference key="1">
    <citation type="journal article" date="1994" name="Arch. Biochem. Biophys.">
        <title>Tartrate dehydrogenase, a new member of the family of metal-dependent decarboxylating R-hydroxyacid dehydrogenases.</title>
        <authorList>
            <person name="Tipton P.A."/>
            <person name="Beecher B.S."/>
        </authorList>
    </citation>
    <scope>NUCLEOTIDE SEQUENCE [GENOMIC DNA]</scope>
    <scope>PROTEIN SEQUENCE OF 2-22 AND 276-294</scope>
    <source>
        <strain>ATCC 17642 / NCIMB 10804 / 276</strain>
    </source>
</reference>
<reference key="2">
    <citation type="journal article" date="1990" name="Biochemistry">
        <title>Characterization of the multiple catalytic activities of tartrate dehydrogenase.</title>
        <authorList>
            <person name="Tipton P.A."/>
            <person name="Peisach J."/>
        </authorList>
    </citation>
    <scope>FUNCTION</scope>
    <scope>CATALYTIC ACTIVITY</scope>
    <scope>COFACTOR</scope>
    <scope>BIOPHYSICOCHEMICAL PROPERTIES</scope>
</reference>
<reference key="3">
    <citation type="journal article" date="1993" name="Biochemistry">
        <title>Intermediate partitioning in the tartrate dehydrogenase-catalyzed oxidative decarboxylation of D-malate.</title>
        <authorList>
            <person name="Tipton P.A."/>
        </authorList>
    </citation>
    <scope>ENZYME KINETICS</scope>
</reference>
<reference key="4">
    <citation type="journal article" date="2002" name="Biochemistry">
        <title>Tartrate dehydrogenase catalyzes the stepwise oxidative decarboxylation of D-malate with both NAD and thio-NAD.</title>
        <authorList>
            <person name="Karsten W.E."/>
            <person name="Tipton P.A."/>
            <person name="Cook P.F."/>
        </authorList>
    </citation>
    <scope>ENZYME KINETICS</scope>
</reference>
<protein>
    <recommendedName>
        <fullName>Tartrate dehydrogenase/decarboxylase</fullName>
        <shortName>TDH</shortName>
        <ecNumber evidence="2">1.1.1.93</ecNumber>
        <ecNumber evidence="2">4.1.1.73</ecNumber>
    </recommendedName>
    <alternativeName>
        <fullName>D-malate dehydrogenase [decarboxylating]</fullName>
        <ecNumber evidence="2">1.1.1.83</ecNumber>
    </alternativeName>
</protein>